<evidence type="ECO:0000255" key="1">
    <source>
        <dbReference type="HAMAP-Rule" id="MF_00815"/>
    </source>
</evidence>
<gene>
    <name evidence="1" type="primary">atpG</name>
    <name type="ordered locus">ROP_11830</name>
</gene>
<proteinExistence type="inferred from homology"/>
<organism>
    <name type="scientific">Rhodococcus opacus (strain B4)</name>
    <dbReference type="NCBI Taxonomy" id="632772"/>
    <lineage>
        <taxon>Bacteria</taxon>
        <taxon>Bacillati</taxon>
        <taxon>Actinomycetota</taxon>
        <taxon>Actinomycetes</taxon>
        <taxon>Mycobacteriales</taxon>
        <taxon>Nocardiaceae</taxon>
        <taxon>Rhodococcus</taxon>
    </lineage>
</organism>
<feature type="chain" id="PRO_1000148633" description="ATP synthase gamma chain">
    <location>
        <begin position="1"/>
        <end position="326"/>
    </location>
</feature>
<dbReference type="EMBL" id="AP011115">
    <property type="protein sequence ID" value="BAH49430.1"/>
    <property type="molecule type" value="Genomic_DNA"/>
</dbReference>
<dbReference type="RefSeq" id="WP_012688408.1">
    <property type="nucleotide sequence ID" value="NC_012522.1"/>
</dbReference>
<dbReference type="SMR" id="C1AW00"/>
<dbReference type="STRING" id="632772.ROP_11830"/>
<dbReference type="KEGG" id="rop:ROP_11830"/>
<dbReference type="PATRIC" id="fig|632772.20.peg.1253"/>
<dbReference type="HOGENOM" id="CLU_050669_0_0_11"/>
<dbReference type="OrthoDB" id="9812769at2"/>
<dbReference type="Proteomes" id="UP000002212">
    <property type="component" value="Chromosome"/>
</dbReference>
<dbReference type="GO" id="GO:0005886">
    <property type="term" value="C:plasma membrane"/>
    <property type="evidence" value="ECO:0007669"/>
    <property type="project" value="UniProtKB-SubCell"/>
</dbReference>
<dbReference type="GO" id="GO:0045259">
    <property type="term" value="C:proton-transporting ATP synthase complex"/>
    <property type="evidence" value="ECO:0007669"/>
    <property type="project" value="UniProtKB-KW"/>
</dbReference>
<dbReference type="GO" id="GO:0005524">
    <property type="term" value="F:ATP binding"/>
    <property type="evidence" value="ECO:0007669"/>
    <property type="project" value="UniProtKB-UniRule"/>
</dbReference>
<dbReference type="GO" id="GO:0046933">
    <property type="term" value="F:proton-transporting ATP synthase activity, rotational mechanism"/>
    <property type="evidence" value="ECO:0007669"/>
    <property type="project" value="UniProtKB-UniRule"/>
</dbReference>
<dbReference type="GO" id="GO:0042777">
    <property type="term" value="P:proton motive force-driven plasma membrane ATP synthesis"/>
    <property type="evidence" value="ECO:0007669"/>
    <property type="project" value="UniProtKB-UniRule"/>
</dbReference>
<dbReference type="CDD" id="cd12151">
    <property type="entry name" value="F1-ATPase_gamma"/>
    <property type="match status" value="1"/>
</dbReference>
<dbReference type="Gene3D" id="3.40.1380.10">
    <property type="match status" value="1"/>
</dbReference>
<dbReference type="Gene3D" id="1.10.287.80">
    <property type="entry name" value="ATP synthase, gamma subunit, helix hairpin domain"/>
    <property type="match status" value="2"/>
</dbReference>
<dbReference type="HAMAP" id="MF_00815">
    <property type="entry name" value="ATP_synth_gamma_bact"/>
    <property type="match status" value="1"/>
</dbReference>
<dbReference type="InterPro" id="IPR035968">
    <property type="entry name" value="ATP_synth_F1_ATPase_gsu"/>
</dbReference>
<dbReference type="InterPro" id="IPR000131">
    <property type="entry name" value="ATP_synth_F1_gsu"/>
</dbReference>
<dbReference type="InterPro" id="IPR023632">
    <property type="entry name" value="ATP_synth_F1_gsu_CS"/>
</dbReference>
<dbReference type="NCBIfam" id="TIGR01146">
    <property type="entry name" value="ATPsyn_F1gamma"/>
    <property type="match status" value="1"/>
</dbReference>
<dbReference type="NCBIfam" id="NF004145">
    <property type="entry name" value="PRK05621.1-2"/>
    <property type="match status" value="1"/>
</dbReference>
<dbReference type="PANTHER" id="PTHR11693">
    <property type="entry name" value="ATP SYNTHASE GAMMA CHAIN"/>
    <property type="match status" value="1"/>
</dbReference>
<dbReference type="PANTHER" id="PTHR11693:SF22">
    <property type="entry name" value="ATP SYNTHASE SUBUNIT GAMMA, MITOCHONDRIAL"/>
    <property type="match status" value="1"/>
</dbReference>
<dbReference type="Pfam" id="PF00231">
    <property type="entry name" value="ATP-synt"/>
    <property type="match status" value="1"/>
</dbReference>
<dbReference type="PRINTS" id="PR00126">
    <property type="entry name" value="ATPASEGAMMA"/>
</dbReference>
<dbReference type="SUPFAM" id="SSF52943">
    <property type="entry name" value="ATP synthase (F1-ATPase), gamma subunit"/>
    <property type="match status" value="1"/>
</dbReference>
<dbReference type="PROSITE" id="PS00153">
    <property type="entry name" value="ATPASE_GAMMA"/>
    <property type="match status" value="1"/>
</dbReference>
<keyword id="KW-0066">ATP synthesis</keyword>
<keyword id="KW-1003">Cell membrane</keyword>
<keyword id="KW-0139">CF(1)</keyword>
<keyword id="KW-0375">Hydrogen ion transport</keyword>
<keyword id="KW-0406">Ion transport</keyword>
<keyword id="KW-0472">Membrane</keyword>
<keyword id="KW-0813">Transport</keyword>
<sequence length="326" mass="34969">MASILELRSRIKSVNSTKKITKAQELIATSRITKAQSRVAAAKPYAEEITKVLSELASASASLDHPLLNERTDPKRAAVLVVTSDRGMCGGYNSNVLKEAEELFQLLRSEGKDPVIYVLGSKGLGYYTFRDRDLGGAWTGFSQDPGYSDAAKASRHLVDLFMAGSGSEVPAPNGEGTIEGVDELHIVYTRFVSMLTQSPEVRRMAPLEVMVSEEHVELGEDMLSNGHGSSNSEPVAGYNFEPEPDKLLGALLPKYISTRIYSSLLDAAASESAARRTAMKAATDNANELVNTLSRQANQARQAQITQEISEIVGGANALASSAGSD</sequence>
<reference key="1">
    <citation type="submission" date="2009-03" db="EMBL/GenBank/DDBJ databases">
        <title>Comparison of the complete genome sequences of Rhodococcus erythropolis PR4 and Rhodococcus opacus B4.</title>
        <authorList>
            <person name="Takarada H."/>
            <person name="Sekine M."/>
            <person name="Hosoyama A."/>
            <person name="Yamada R."/>
            <person name="Fujisawa T."/>
            <person name="Omata S."/>
            <person name="Shimizu A."/>
            <person name="Tsukatani N."/>
            <person name="Tanikawa S."/>
            <person name="Fujita N."/>
            <person name="Harayama S."/>
        </authorList>
    </citation>
    <scope>NUCLEOTIDE SEQUENCE [LARGE SCALE GENOMIC DNA]</scope>
    <source>
        <strain>B4</strain>
    </source>
</reference>
<protein>
    <recommendedName>
        <fullName evidence="1">ATP synthase gamma chain</fullName>
    </recommendedName>
    <alternativeName>
        <fullName evidence="1">ATP synthase F1 sector gamma subunit</fullName>
    </alternativeName>
    <alternativeName>
        <fullName evidence="1">F-ATPase gamma subunit</fullName>
    </alternativeName>
</protein>
<accession>C1AW00</accession>
<name>ATPG_RHOOB</name>
<comment type="function">
    <text evidence="1">Produces ATP from ADP in the presence of a proton gradient across the membrane. The gamma chain is believed to be important in regulating ATPase activity and the flow of protons through the CF(0) complex.</text>
</comment>
<comment type="subunit">
    <text evidence="1">F-type ATPases have 2 components, CF(1) - the catalytic core - and CF(0) - the membrane proton channel. CF(1) has five subunits: alpha(3), beta(3), gamma(1), delta(1), epsilon(1). CF(0) has three main subunits: a, b and c.</text>
</comment>
<comment type="subcellular location">
    <subcellularLocation>
        <location evidence="1">Cell membrane</location>
        <topology evidence="1">Peripheral membrane protein</topology>
    </subcellularLocation>
</comment>
<comment type="similarity">
    <text evidence="1">Belongs to the ATPase gamma chain family.</text>
</comment>